<proteinExistence type="predicted"/>
<organism>
    <name type="scientific">Mus musculus</name>
    <name type="common">Mouse</name>
    <dbReference type="NCBI Taxonomy" id="10090"/>
    <lineage>
        <taxon>Eukaryota</taxon>
        <taxon>Metazoa</taxon>
        <taxon>Chordata</taxon>
        <taxon>Craniata</taxon>
        <taxon>Vertebrata</taxon>
        <taxon>Euteleostomi</taxon>
        <taxon>Mammalia</taxon>
        <taxon>Eutheria</taxon>
        <taxon>Euarchontoglires</taxon>
        <taxon>Glires</taxon>
        <taxon>Rodentia</taxon>
        <taxon>Myomorpha</taxon>
        <taxon>Muroidea</taxon>
        <taxon>Muridae</taxon>
        <taxon>Murinae</taxon>
        <taxon>Mus</taxon>
        <taxon>Mus</taxon>
    </lineage>
</organism>
<sequence>MSEADSSSGFAGSVENGTFLELFPTSLSTSVDSSSGHLSNVYIYVSIFLSLLAFLLLLLIIALQRLKNIISSSSSYPEYPSDAGSSFTNLEVCSISSQRSTFSNLSS</sequence>
<dbReference type="EMBL" id="AK031306">
    <property type="protein sequence ID" value="BAC27339.1"/>
    <property type="molecule type" value="mRNA"/>
</dbReference>
<dbReference type="EMBL" id="BC058995">
    <property type="protein sequence ID" value="AAH58995.1"/>
    <property type="molecule type" value="mRNA"/>
</dbReference>
<dbReference type="CCDS" id="CCDS17355.1"/>
<dbReference type="RefSeq" id="NP_808522.1">
    <property type="nucleotide sequence ID" value="NM_177854.4"/>
</dbReference>
<dbReference type="SMR" id="Q8CD78"/>
<dbReference type="FunCoup" id="Q8CD78">
    <property type="interactions" value="1030"/>
</dbReference>
<dbReference type="STRING" id="10090.ENSMUSP00000064870"/>
<dbReference type="iPTMnet" id="Q8CD78"/>
<dbReference type="PhosphoSitePlus" id="Q8CD78"/>
<dbReference type="PaxDb" id="10090-ENSMUSP00000064870"/>
<dbReference type="ProteomicsDB" id="257415"/>
<dbReference type="Antibodypedia" id="57544">
    <property type="antibodies" value="9 antibodies from 5 providers"/>
</dbReference>
<dbReference type="DNASU" id="329641"/>
<dbReference type="Ensembl" id="ENSMUST00000070342.4">
    <property type="protein sequence ID" value="ENSMUSP00000064870.4"/>
    <property type="gene ID" value="ENSMUSG00000056306.7"/>
</dbReference>
<dbReference type="Ensembl" id="ENSMUST00000162201.3">
    <property type="protein sequence ID" value="ENSMUSP00000124102.2"/>
    <property type="gene ID" value="ENSMUSG00000056306.7"/>
</dbReference>
<dbReference type="GeneID" id="329641"/>
<dbReference type="KEGG" id="mmu:329641"/>
<dbReference type="UCSC" id="uc008pfx.2">
    <property type="organism name" value="mouse"/>
</dbReference>
<dbReference type="AGR" id="MGI:3607715"/>
<dbReference type="CTD" id="400120"/>
<dbReference type="MGI" id="MGI:3607715">
    <property type="gene designation" value="Sertm1"/>
</dbReference>
<dbReference type="VEuPathDB" id="HostDB:ENSMUSG00000056306"/>
<dbReference type="eggNOG" id="ENOG502S4A5">
    <property type="taxonomic scope" value="Eukaryota"/>
</dbReference>
<dbReference type="GeneTree" id="ENSGT00390000016881"/>
<dbReference type="HOGENOM" id="CLU_2196038_0_0_1"/>
<dbReference type="InParanoid" id="Q8CD78"/>
<dbReference type="OMA" id="VYVWIFL"/>
<dbReference type="PhylomeDB" id="Q8CD78"/>
<dbReference type="TreeFam" id="TF338260"/>
<dbReference type="BioGRID-ORCS" id="329641">
    <property type="hits" value="2 hits in 76 CRISPR screens"/>
</dbReference>
<dbReference type="PRO" id="PR:Q8CD78"/>
<dbReference type="Proteomes" id="UP000000589">
    <property type="component" value="Chromosome 3"/>
</dbReference>
<dbReference type="RNAct" id="Q8CD78">
    <property type="molecule type" value="protein"/>
</dbReference>
<dbReference type="Bgee" id="ENSMUSG00000056306">
    <property type="expression patterns" value="Expressed in subiculum and 76 other cell types or tissues"/>
</dbReference>
<dbReference type="GO" id="GO:0043231">
    <property type="term" value="C:intracellular membrane-bounded organelle"/>
    <property type="evidence" value="ECO:0007669"/>
    <property type="project" value="Ensembl"/>
</dbReference>
<dbReference type="GO" id="GO:0016020">
    <property type="term" value="C:membrane"/>
    <property type="evidence" value="ECO:0007669"/>
    <property type="project" value="UniProtKB-SubCell"/>
</dbReference>
<dbReference type="InterPro" id="IPR031741">
    <property type="entry name" value="SERTM"/>
</dbReference>
<dbReference type="PANTHER" id="PTHR35660">
    <property type="entry name" value="SERINE-RICH AND TRANSMEMBRANE DOMAIN-CONTAINING PROTEIN 1"/>
    <property type="match status" value="1"/>
</dbReference>
<dbReference type="PANTHER" id="PTHR35660:SF1">
    <property type="entry name" value="SERINE-RICH AND TRANSMEMBRANE DOMAIN-CONTAINING PROTEIN 1"/>
    <property type="match status" value="1"/>
</dbReference>
<dbReference type="Pfam" id="PF15872">
    <property type="entry name" value="SRTM1"/>
    <property type="match status" value="1"/>
</dbReference>
<accession>Q8CD78</accession>
<feature type="chain" id="PRO_0000331522" description="Serine-rich and transmembrane domain-containing protein 1">
    <location>
        <begin position="1"/>
        <end position="107"/>
    </location>
</feature>
<feature type="transmembrane region" description="Helical" evidence="1">
    <location>
        <begin position="43"/>
        <end position="63"/>
    </location>
</feature>
<reference key="1">
    <citation type="journal article" date="2005" name="Science">
        <title>The transcriptional landscape of the mammalian genome.</title>
        <authorList>
            <person name="Carninci P."/>
            <person name="Kasukawa T."/>
            <person name="Katayama S."/>
            <person name="Gough J."/>
            <person name="Frith M.C."/>
            <person name="Maeda N."/>
            <person name="Oyama R."/>
            <person name="Ravasi T."/>
            <person name="Lenhard B."/>
            <person name="Wells C."/>
            <person name="Kodzius R."/>
            <person name="Shimokawa K."/>
            <person name="Bajic V.B."/>
            <person name="Brenner S.E."/>
            <person name="Batalov S."/>
            <person name="Forrest A.R."/>
            <person name="Zavolan M."/>
            <person name="Davis M.J."/>
            <person name="Wilming L.G."/>
            <person name="Aidinis V."/>
            <person name="Allen J.E."/>
            <person name="Ambesi-Impiombato A."/>
            <person name="Apweiler R."/>
            <person name="Aturaliya R.N."/>
            <person name="Bailey T.L."/>
            <person name="Bansal M."/>
            <person name="Baxter L."/>
            <person name="Beisel K.W."/>
            <person name="Bersano T."/>
            <person name="Bono H."/>
            <person name="Chalk A.M."/>
            <person name="Chiu K.P."/>
            <person name="Choudhary V."/>
            <person name="Christoffels A."/>
            <person name="Clutterbuck D.R."/>
            <person name="Crowe M.L."/>
            <person name="Dalla E."/>
            <person name="Dalrymple B.P."/>
            <person name="de Bono B."/>
            <person name="Della Gatta G."/>
            <person name="di Bernardo D."/>
            <person name="Down T."/>
            <person name="Engstrom P."/>
            <person name="Fagiolini M."/>
            <person name="Faulkner G."/>
            <person name="Fletcher C.F."/>
            <person name="Fukushima T."/>
            <person name="Furuno M."/>
            <person name="Futaki S."/>
            <person name="Gariboldi M."/>
            <person name="Georgii-Hemming P."/>
            <person name="Gingeras T.R."/>
            <person name="Gojobori T."/>
            <person name="Green R.E."/>
            <person name="Gustincich S."/>
            <person name="Harbers M."/>
            <person name="Hayashi Y."/>
            <person name="Hensch T.K."/>
            <person name="Hirokawa N."/>
            <person name="Hill D."/>
            <person name="Huminiecki L."/>
            <person name="Iacono M."/>
            <person name="Ikeo K."/>
            <person name="Iwama A."/>
            <person name="Ishikawa T."/>
            <person name="Jakt M."/>
            <person name="Kanapin A."/>
            <person name="Katoh M."/>
            <person name="Kawasawa Y."/>
            <person name="Kelso J."/>
            <person name="Kitamura H."/>
            <person name="Kitano H."/>
            <person name="Kollias G."/>
            <person name="Krishnan S.P."/>
            <person name="Kruger A."/>
            <person name="Kummerfeld S.K."/>
            <person name="Kurochkin I.V."/>
            <person name="Lareau L.F."/>
            <person name="Lazarevic D."/>
            <person name="Lipovich L."/>
            <person name="Liu J."/>
            <person name="Liuni S."/>
            <person name="McWilliam S."/>
            <person name="Madan Babu M."/>
            <person name="Madera M."/>
            <person name="Marchionni L."/>
            <person name="Matsuda H."/>
            <person name="Matsuzawa S."/>
            <person name="Miki H."/>
            <person name="Mignone F."/>
            <person name="Miyake S."/>
            <person name="Morris K."/>
            <person name="Mottagui-Tabar S."/>
            <person name="Mulder N."/>
            <person name="Nakano N."/>
            <person name="Nakauchi H."/>
            <person name="Ng P."/>
            <person name="Nilsson R."/>
            <person name="Nishiguchi S."/>
            <person name="Nishikawa S."/>
            <person name="Nori F."/>
            <person name="Ohara O."/>
            <person name="Okazaki Y."/>
            <person name="Orlando V."/>
            <person name="Pang K.C."/>
            <person name="Pavan W.J."/>
            <person name="Pavesi G."/>
            <person name="Pesole G."/>
            <person name="Petrovsky N."/>
            <person name="Piazza S."/>
            <person name="Reed J."/>
            <person name="Reid J.F."/>
            <person name="Ring B.Z."/>
            <person name="Ringwald M."/>
            <person name="Rost B."/>
            <person name="Ruan Y."/>
            <person name="Salzberg S.L."/>
            <person name="Sandelin A."/>
            <person name="Schneider C."/>
            <person name="Schoenbach C."/>
            <person name="Sekiguchi K."/>
            <person name="Semple C.A."/>
            <person name="Seno S."/>
            <person name="Sessa L."/>
            <person name="Sheng Y."/>
            <person name="Shibata Y."/>
            <person name="Shimada H."/>
            <person name="Shimada K."/>
            <person name="Silva D."/>
            <person name="Sinclair B."/>
            <person name="Sperling S."/>
            <person name="Stupka E."/>
            <person name="Sugiura K."/>
            <person name="Sultana R."/>
            <person name="Takenaka Y."/>
            <person name="Taki K."/>
            <person name="Tammoja K."/>
            <person name="Tan S.L."/>
            <person name="Tang S."/>
            <person name="Taylor M.S."/>
            <person name="Tegner J."/>
            <person name="Teichmann S.A."/>
            <person name="Ueda H.R."/>
            <person name="van Nimwegen E."/>
            <person name="Verardo R."/>
            <person name="Wei C.L."/>
            <person name="Yagi K."/>
            <person name="Yamanishi H."/>
            <person name="Zabarovsky E."/>
            <person name="Zhu S."/>
            <person name="Zimmer A."/>
            <person name="Hide W."/>
            <person name="Bult C."/>
            <person name="Grimmond S.M."/>
            <person name="Teasdale R.D."/>
            <person name="Liu E.T."/>
            <person name="Brusic V."/>
            <person name="Quackenbush J."/>
            <person name="Wahlestedt C."/>
            <person name="Mattick J.S."/>
            <person name="Hume D.A."/>
            <person name="Kai C."/>
            <person name="Sasaki D."/>
            <person name="Tomaru Y."/>
            <person name="Fukuda S."/>
            <person name="Kanamori-Katayama M."/>
            <person name="Suzuki M."/>
            <person name="Aoki J."/>
            <person name="Arakawa T."/>
            <person name="Iida J."/>
            <person name="Imamura K."/>
            <person name="Itoh M."/>
            <person name="Kato T."/>
            <person name="Kawaji H."/>
            <person name="Kawagashira N."/>
            <person name="Kawashima T."/>
            <person name="Kojima M."/>
            <person name="Kondo S."/>
            <person name="Konno H."/>
            <person name="Nakano K."/>
            <person name="Ninomiya N."/>
            <person name="Nishio T."/>
            <person name="Okada M."/>
            <person name="Plessy C."/>
            <person name="Shibata K."/>
            <person name="Shiraki T."/>
            <person name="Suzuki S."/>
            <person name="Tagami M."/>
            <person name="Waki K."/>
            <person name="Watahiki A."/>
            <person name="Okamura-Oho Y."/>
            <person name="Suzuki H."/>
            <person name="Kawai J."/>
            <person name="Hayashizaki Y."/>
        </authorList>
    </citation>
    <scope>NUCLEOTIDE SEQUENCE [LARGE SCALE MRNA]</scope>
    <source>
        <strain>C57BL/6J</strain>
        <tissue>Testis</tissue>
    </source>
</reference>
<reference key="2">
    <citation type="journal article" date="2004" name="Genome Res.">
        <title>The status, quality, and expansion of the NIH full-length cDNA project: the Mammalian Gene Collection (MGC).</title>
        <authorList>
            <consortium name="The MGC Project Team"/>
        </authorList>
    </citation>
    <scope>NUCLEOTIDE SEQUENCE [LARGE SCALE MRNA]</scope>
    <source>
        <strain>C57BL/6J</strain>
        <tissue>Brain</tissue>
    </source>
</reference>
<comment type="subcellular location">
    <subcellularLocation>
        <location evidence="2">Membrane</location>
        <topology evidence="2">Single-pass membrane protein</topology>
    </subcellularLocation>
</comment>
<protein>
    <recommendedName>
        <fullName>Serine-rich and transmembrane domain-containing protein 1</fullName>
    </recommendedName>
</protein>
<evidence type="ECO:0000255" key="1"/>
<evidence type="ECO:0000305" key="2"/>
<keyword id="KW-0472">Membrane</keyword>
<keyword id="KW-1185">Reference proteome</keyword>
<keyword id="KW-0812">Transmembrane</keyword>
<keyword id="KW-1133">Transmembrane helix</keyword>
<name>SRTM1_MOUSE</name>
<gene>
    <name type="primary">Sertm1</name>
</gene>